<comment type="function">
    <text evidence="1">Fluoride-specific ion channel. Important for reducing fluoride concentration in the cell, thus reducing its toxicity.</text>
</comment>
<comment type="catalytic activity">
    <reaction evidence="1">
        <text>fluoride(in) = fluoride(out)</text>
        <dbReference type="Rhea" id="RHEA:76159"/>
        <dbReference type="ChEBI" id="CHEBI:17051"/>
    </reaction>
    <physiologicalReaction direction="left-to-right" evidence="1">
        <dbReference type="Rhea" id="RHEA:76160"/>
    </physiologicalReaction>
</comment>
<comment type="activity regulation">
    <text evidence="1">Na(+) is not transported, but it plays an essential structural role and its presence is essential for fluoride channel function.</text>
</comment>
<comment type="subcellular location">
    <subcellularLocation>
        <location evidence="1">Cell inner membrane</location>
        <topology evidence="1">Multi-pass membrane protein</topology>
    </subcellularLocation>
</comment>
<comment type="similarity">
    <text evidence="1">Belongs to the fluoride channel Fluc/FEX (TC 1.A.43) family.</text>
</comment>
<evidence type="ECO:0000255" key="1">
    <source>
        <dbReference type="HAMAP-Rule" id="MF_00454"/>
    </source>
</evidence>
<sequence length="124" mass="12558">MKHTFLQVALGGALGSAARYGVNILAGRLTPGFPLGTLSVNIAGCLAMGLLAALLAHRGGQHLAPFLLTGMLGGFTTFSAFALDTMTLWERGEIATALGYVLGSVVLSLAAVIAGLTVGRGLFA</sequence>
<protein>
    <recommendedName>
        <fullName evidence="1">Fluoride-specific ion channel FluC</fullName>
    </recommendedName>
</protein>
<organism>
    <name type="scientific">Paracoccus denitrificans (strain Pd 1222)</name>
    <dbReference type="NCBI Taxonomy" id="318586"/>
    <lineage>
        <taxon>Bacteria</taxon>
        <taxon>Pseudomonadati</taxon>
        <taxon>Pseudomonadota</taxon>
        <taxon>Alphaproteobacteria</taxon>
        <taxon>Rhodobacterales</taxon>
        <taxon>Paracoccaceae</taxon>
        <taxon>Paracoccus</taxon>
    </lineage>
</organism>
<gene>
    <name evidence="1" type="primary">fluC</name>
    <name evidence="1" type="synonym">crcB</name>
    <name type="ordered locus">Pden_0789</name>
</gene>
<name>FLUC_PARDP</name>
<dbReference type="EMBL" id="CP000489">
    <property type="protein sequence ID" value="ABL68901.1"/>
    <property type="molecule type" value="Genomic_DNA"/>
</dbReference>
<dbReference type="RefSeq" id="WP_011747129.1">
    <property type="nucleotide sequence ID" value="NC_008686.1"/>
</dbReference>
<dbReference type="SMR" id="A1B057"/>
<dbReference type="STRING" id="318586.Pden_0789"/>
<dbReference type="EnsemblBacteria" id="ABL68901">
    <property type="protein sequence ID" value="ABL68901"/>
    <property type="gene ID" value="Pden_0789"/>
</dbReference>
<dbReference type="GeneID" id="93452013"/>
<dbReference type="KEGG" id="pde:Pden_0789"/>
<dbReference type="eggNOG" id="COG0239">
    <property type="taxonomic scope" value="Bacteria"/>
</dbReference>
<dbReference type="HOGENOM" id="CLU_114342_3_0_5"/>
<dbReference type="OrthoDB" id="9806299at2"/>
<dbReference type="Proteomes" id="UP000000361">
    <property type="component" value="Chromosome 1"/>
</dbReference>
<dbReference type="GO" id="GO:0005886">
    <property type="term" value="C:plasma membrane"/>
    <property type="evidence" value="ECO:0007669"/>
    <property type="project" value="UniProtKB-SubCell"/>
</dbReference>
<dbReference type="GO" id="GO:0062054">
    <property type="term" value="F:fluoride channel activity"/>
    <property type="evidence" value="ECO:0007669"/>
    <property type="project" value="UniProtKB-UniRule"/>
</dbReference>
<dbReference type="GO" id="GO:0046872">
    <property type="term" value="F:metal ion binding"/>
    <property type="evidence" value="ECO:0007669"/>
    <property type="project" value="UniProtKB-KW"/>
</dbReference>
<dbReference type="GO" id="GO:0140114">
    <property type="term" value="P:cellular detoxification of fluoride"/>
    <property type="evidence" value="ECO:0007669"/>
    <property type="project" value="UniProtKB-UniRule"/>
</dbReference>
<dbReference type="HAMAP" id="MF_00454">
    <property type="entry name" value="FluC"/>
    <property type="match status" value="1"/>
</dbReference>
<dbReference type="InterPro" id="IPR003691">
    <property type="entry name" value="FluC"/>
</dbReference>
<dbReference type="NCBIfam" id="TIGR00494">
    <property type="entry name" value="crcB"/>
    <property type="match status" value="1"/>
</dbReference>
<dbReference type="NCBIfam" id="NF010805">
    <property type="entry name" value="PRK14209.1"/>
    <property type="match status" value="1"/>
</dbReference>
<dbReference type="PANTHER" id="PTHR28259">
    <property type="entry name" value="FLUORIDE EXPORT PROTEIN 1-RELATED"/>
    <property type="match status" value="1"/>
</dbReference>
<dbReference type="PANTHER" id="PTHR28259:SF18">
    <property type="entry name" value="FLUORIDE-SPECIFIC ION CHANNEL FLUC"/>
    <property type="match status" value="1"/>
</dbReference>
<dbReference type="Pfam" id="PF02537">
    <property type="entry name" value="CRCB"/>
    <property type="match status" value="1"/>
</dbReference>
<proteinExistence type="inferred from homology"/>
<keyword id="KW-0997">Cell inner membrane</keyword>
<keyword id="KW-1003">Cell membrane</keyword>
<keyword id="KW-0407">Ion channel</keyword>
<keyword id="KW-0406">Ion transport</keyword>
<keyword id="KW-0472">Membrane</keyword>
<keyword id="KW-0479">Metal-binding</keyword>
<keyword id="KW-1185">Reference proteome</keyword>
<keyword id="KW-0915">Sodium</keyword>
<keyword id="KW-0812">Transmembrane</keyword>
<keyword id="KW-1133">Transmembrane helix</keyword>
<keyword id="KW-0813">Transport</keyword>
<reference key="1">
    <citation type="submission" date="2006-12" db="EMBL/GenBank/DDBJ databases">
        <title>Complete sequence of chromosome 1 of Paracoccus denitrificans PD1222.</title>
        <authorList>
            <person name="Copeland A."/>
            <person name="Lucas S."/>
            <person name="Lapidus A."/>
            <person name="Barry K."/>
            <person name="Detter J.C."/>
            <person name="Glavina del Rio T."/>
            <person name="Hammon N."/>
            <person name="Israni S."/>
            <person name="Dalin E."/>
            <person name="Tice H."/>
            <person name="Pitluck S."/>
            <person name="Munk A.C."/>
            <person name="Brettin T."/>
            <person name="Bruce D."/>
            <person name="Han C."/>
            <person name="Tapia R."/>
            <person name="Gilna P."/>
            <person name="Schmutz J."/>
            <person name="Larimer F."/>
            <person name="Land M."/>
            <person name="Hauser L."/>
            <person name="Kyrpides N."/>
            <person name="Lykidis A."/>
            <person name="Spiro S."/>
            <person name="Richardson D.J."/>
            <person name="Moir J.W.B."/>
            <person name="Ferguson S.J."/>
            <person name="van Spanning R.J.M."/>
            <person name="Richardson P."/>
        </authorList>
    </citation>
    <scope>NUCLEOTIDE SEQUENCE [LARGE SCALE GENOMIC DNA]</scope>
    <source>
        <strain>Pd 1222</strain>
    </source>
</reference>
<accession>A1B057</accession>
<feature type="chain" id="PRO_1000026405" description="Fluoride-specific ion channel FluC">
    <location>
        <begin position="1"/>
        <end position="124"/>
    </location>
</feature>
<feature type="transmembrane region" description="Helical" evidence="1">
    <location>
        <begin position="5"/>
        <end position="25"/>
    </location>
</feature>
<feature type="transmembrane region" description="Helical" evidence="1">
    <location>
        <begin position="35"/>
        <end position="55"/>
    </location>
</feature>
<feature type="transmembrane region" description="Helical" evidence="1">
    <location>
        <begin position="63"/>
        <end position="83"/>
    </location>
</feature>
<feature type="transmembrane region" description="Helical" evidence="1">
    <location>
        <begin position="98"/>
        <end position="118"/>
    </location>
</feature>
<feature type="binding site" evidence="1">
    <location>
        <position position="73"/>
    </location>
    <ligand>
        <name>Na(+)</name>
        <dbReference type="ChEBI" id="CHEBI:29101"/>
        <note>structural</note>
    </ligand>
</feature>
<feature type="binding site" evidence="1">
    <location>
        <position position="76"/>
    </location>
    <ligand>
        <name>Na(+)</name>
        <dbReference type="ChEBI" id="CHEBI:29101"/>
        <note>structural</note>
    </ligand>
</feature>